<accession>F4IHU9</accession>
<accession>O80785</accession>
<organism>
    <name type="scientific">Arabidopsis thaliana</name>
    <name type="common">Mouse-ear cress</name>
    <dbReference type="NCBI Taxonomy" id="3702"/>
    <lineage>
        <taxon>Eukaryota</taxon>
        <taxon>Viridiplantae</taxon>
        <taxon>Streptophyta</taxon>
        <taxon>Embryophyta</taxon>
        <taxon>Tracheophyta</taxon>
        <taxon>Spermatophyta</taxon>
        <taxon>Magnoliopsida</taxon>
        <taxon>eudicotyledons</taxon>
        <taxon>Gunneridae</taxon>
        <taxon>Pentapetalae</taxon>
        <taxon>rosids</taxon>
        <taxon>malvids</taxon>
        <taxon>Brassicales</taxon>
        <taxon>Brassicaceae</taxon>
        <taxon>Camelineae</taxon>
        <taxon>Arabidopsis</taxon>
    </lineage>
</organism>
<gene>
    <name evidence="2" type="primary">DTX15</name>
    <name evidence="4" type="ordered locus">At2g34360</name>
    <name evidence="5" type="ORF">F13P17.20</name>
</gene>
<feature type="chain" id="PRO_0000434058" description="Protein DETOXIFICATION 15">
    <location>
        <begin position="1"/>
        <end position="480"/>
    </location>
</feature>
<feature type="transmembrane region" description="Helical" evidence="1">
    <location>
        <begin position="36"/>
        <end position="56"/>
    </location>
</feature>
<feature type="transmembrane region" description="Helical" evidence="1">
    <location>
        <begin position="69"/>
        <end position="89"/>
    </location>
</feature>
<feature type="transmembrane region" description="Helical" evidence="1">
    <location>
        <begin position="118"/>
        <end position="138"/>
    </location>
</feature>
<feature type="transmembrane region" description="Helical" evidence="1">
    <location>
        <begin position="143"/>
        <end position="163"/>
    </location>
</feature>
<feature type="transmembrane region" description="Helical" evidence="1">
    <location>
        <begin position="180"/>
        <end position="200"/>
    </location>
</feature>
<feature type="transmembrane region" description="Helical" evidence="1">
    <location>
        <begin position="208"/>
        <end position="228"/>
    </location>
</feature>
<feature type="transmembrane region" description="Helical" evidence="1">
    <location>
        <begin position="255"/>
        <end position="275"/>
    </location>
</feature>
<feature type="transmembrane region" description="Helical" evidence="1">
    <location>
        <begin position="294"/>
        <end position="314"/>
    </location>
</feature>
<feature type="transmembrane region" description="Helical" evidence="1">
    <location>
        <begin position="326"/>
        <end position="346"/>
    </location>
</feature>
<feature type="transmembrane region" description="Helical" evidence="1">
    <location>
        <begin position="360"/>
        <end position="380"/>
    </location>
</feature>
<feature type="transmembrane region" description="Helical" evidence="1">
    <location>
        <begin position="396"/>
        <end position="416"/>
    </location>
</feature>
<feature type="transmembrane region" description="Helical" evidence="1">
    <location>
        <begin position="428"/>
        <end position="448"/>
    </location>
</feature>
<evidence type="ECO:0000255" key="1"/>
<evidence type="ECO:0000303" key="2">
    <source>
    </source>
</evidence>
<evidence type="ECO:0000305" key="3"/>
<evidence type="ECO:0000312" key="4">
    <source>
        <dbReference type="Araport" id="AT2G34360"/>
    </source>
</evidence>
<evidence type="ECO:0000312" key="5">
    <source>
        <dbReference type="EMBL" id="AAC27412.1"/>
    </source>
</evidence>
<reference key="1">
    <citation type="journal article" date="1999" name="Nature">
        <title>Sequence and analysis of chromosome 2 of the plant Arabidopsis thaliana.</title>
        <authorList>
            <person name="Lin X."/>
            <person name="Kaul S."/>
            <person name="Rounsley S.D."/>
            <person name="Shea T.P."/>
            <person name="Benito M.-I."/>
            <person name="Town C.D."/>
            <person name="Fujii C.Y."/>
            <person name="Mason T.M."/>
            <person name="Bowman C.L."/>
            <person name="Barnstead M.E."/>
            <person name="Feldblyum T.V."/>
            <person name="Buell C.R."/>
            <person name="Ketchum K.A."/>
            <person name="Lee J.J."/>
            <person name="Ronning C.M."/>
            <person name="Koo H.L."/>
            <person name="Moffat K.S."/>
            <person name="Cronin L.A."/>
            <person name="Shen M."/>
            <person name="Pai G."/>
            <person name="Van Aken S."/>
            <person name="Umayam L."/>
            <person name="Tallon L.J."/>
            <person name="Gill J.E."/>
            <person name="Adams M.D."/>
            <person name="Carrera A.J."/>
            <person name="Creasy T.H."/>
            <person name="Goodman H.M."/>
            <person name="Somerville C.R."/>
            <person name="Copenhaver G.P."/>
            <person name="Preuss D."/>
            <person name="Nierman W.C."/>
            <person name="White O."/>
            <person name="Eisen J.A."/>
            <person name="Salzberg S.L."/>
            <person name="Fraser C.M."/>
            <person name="Venter J.C."/>
        </authorList>
    </citation>
    <scope>NUCLEOTIDE SEQUENCE [LARGE SCALE GENOMIC DNA]</scope>
    <source>
        <strain>cv. Columbia</strain>
    </source>
</reference>
<reference key="2">
    <citation type="journal article" date="2017" name="Plant J.">
        <title>Araport11: a complete reannotation of the Arabidopsis thaliana reference genome.</title>
        <authorList>
            <person name="Cheng C.Y."/>
            <person name="Krishnakumar V."/>
            <person name="Chan A.P."/>
            <person name="Thibaud-Nissen F."/>
            <person name="Schobel S."/>
            <person name="Town C.D."/>
        </authorList>
    </citation>
    <scope>GENOME REANNOTATION</scope>
    <source>
        <strain>cv. Columbia</strain>
    </source>
</reference>
<reference key="3">
    <citation type="journal article" date="2002" name="J. Biol. Chem.">
        <title>Functional cloning and characterization of a plant efflux carrier for multidrug and heavy metal detoxification.</title>
        <authorList>
            <person name="Li L."/>
            <person name="He Z."/>
            <person name="Pandey G.K."/>
            <person name="Tsuchiya T."/>
            <person name="Luan S."/>
        </authorList>
    </citation>
    <scope>GENE FAMILY</scope>
    <scope>NOMENCLATURE</scope>
</reference>
<reference key="4">
    <citation type="journal article" date="2003" name="Eur. J. Biochem.">
        <title>The multidrug/oligosaccharidyl-lipid/polysaccharide (MOP) exporter superfamily.</title>
        <authorList>
            <person name="Hvorup R.N."/>
            <person name="Winnen B."/>
            <person name="Chang A.B."/>
            <person name="Jiang Y."/>
            <person name="Zhou X.F."/>
            <person name="Saier M.H. Jr."/>
        </authorList>
    </citation>
    <scope>GENE FAMILY</scope>
</reference>
<sequence length="480" mass="52187">MREEREDMLSWPLIGEKEKRSRFVKEEVEKQLLLSGPLIAVSLLQFCLQIISVMFVGHLGSLPLSAASIATSFASVTGFTFLMGTASAMDTVCGQSYGAKMYGMLGIQMQRAMLVLTLLSVPLSIVWANTEHFLVFFGQDKSIAHLSGSYARFMIPSIFAYGLLQCLNRFLQAQNNVIPVVICSGVTTSLHVIICWVLVLKSGLGFRGAAVANAISYWLNVILLSCYVKFSPSCSLTWTGFSKEARRDIIPFMKLVIPSAFMVCSLEMWSFELLVLSSGLLPNPVLETSCPRTVWMIPFGLSGAASTRVSNELGSGNPKGAKLAVRVVLSFSIVESILVGTVLILIRKIWGFAYSSDPEVVSHVASMLPILALGHSLDSFQTVLSGVARGCGWQKIGAFVNLGSYYLVGVPFGLLLGFHFHVGGRGLWLGIICALIVQGVCLSLITFFTNWDEEVKKATSRAKSSSEVKEFAVDNGSILV</sequence>
<keyword id="KW-0472">Membrane</keyword>
<keyword id="KW-1185">Reference proteome</keyword>
<keyword id="KW-0812">Transmembrane</keyword>
<keyword id="KW-1133">Transmembrane helix</keyword>
<keyword id="KW-0813">Transport</keyword>
<name>DTX15_ARATH</name>
<protein>
    <recommendedName>
        <fullName evidence="2">Protein DETOXIFICATION 15</fullName>
        <shortName evidence="2">AtDTX15</shortName>
    </recommendedName>
    <alternativeName>
        <fullName evidence="3">Multidrug and toxic compound extrusion protein 15</fullName>
        <shortName evidence="3">MATE protein 15</shortName>
    </alternativeName>
</protein>
<proteinExistence type="inferred from homology"/>
<dbReference type="EMBL" id="AC004481">
    <property type="protein sequence ID" value="AAC27412.1"/>
    <property type="status" value="ALT_SEQ"/>
    <property type="molecule type" value="Genomic_DNA"/>
</dbReference>
<dbReference type="EMBL" id="CP002685">
    <property type="protein sequence ID" value="AEC08964.1"/>
    <property type="molecule type" value="Genomic_DNA"/>
</dbReference>
<dbReference type="PIR" id="T02324">
    <property type="entry name" value="T02324"/>
</dbReference>
<dbReference type="RefSeq" id="NP_180983.4">
    <property type="nucleotide sequence ID" value="NM_128988.5"/>
</dbReference>
<dbReference type="SMR" id="F4IHU9"/>
<dbReference type="FunCoup" id="F4IHU9">
    <property type="interactions" value="295"/>
</dbReference>
<dbReference type="STRING" id="3702.F4IHU9"/>
<dbReference type="PaxDb" id="3702-AT2G34360.1"/>
<dbReference type="EnsemblPlants" id="AT2G34360.1">
    <property type="protein sequence ID" value="AT2G34360.1"/>
    <property type="gene ID" value="AT2G34360"/>
</dbReference>
<dbReference type="GeneID" id="817999"/>
<dbReference type="Gramene" id="AT2G34360.1">
    <property type="protein sequence ID" value="AT2G34360.1"/>
    <property type="gene ID" value="AT2G34360"/>
</dbReference>
<dbReference type="KEGG" id="ath:AT2G34360"/>
<dbReference type="Araport" id="AT2G34360"/>
<dbReference type="TAIR" id="AT2G34360"/>
<dbReference type="eggNOG" id="KOG1347">
    <property type="taxonomic scope" value="Eukaryota"/>
</dbReference>
<dbReference type="HOGENOM" id="CLU_012893_1_4_1"/>
<dbReference type="InParanoid" id="F4IHU9"/>
<dbReference type="OMA" id="AISTWIN"/>
<dbReference type="PRO" id="PR:F4IHU9"/>
<dbReference type="Proteomes" id="UP000006548">
    <property type="component" value="Chromosome 2"/>
</dbReference>
<dbReference type="ExpressionAtlas" id="F4IHU9">
    <property type="expression patterns" value="baseline and differential"/>
</dbReference>
<dbReference type="GO" id="GO:0016020">
    <property type="term" value="C:membrane"/>
    <property type="evidence" value="ECO:0007669"/>
    <property type="project" value="UniProtKB-SubCell"/>
</dbReference>
<dbReference type="GO" id="GO:0015297">
    <property type="term" value="F:antiporter activity"/>
    <property type="evidence" value="ECO:0007669"/>
    <property type="project" value="InterPro"/>
</dbReference>
<dbReference type="GO" id="GO:0042910">
    <property type="term" value="F:xenobiotic transmembrane transporter activity"/>
    <property type="evidence" value="ECO:0007669"/>
    <property type="project" value="InterPro"/>
</dbReference>
<dbReference type="GO" id="GO:1990961">
    <property type="term" value="P:xenobiotic detoxification by transmembrane export across the plasma membrane"/>
    <property type="evidence" value="ECO:0007669"/>
    <property type="project" value="InterPro"/>
</dbReference>
<dbReference type="CDD" id="cd13132">
    <property type="entry name" value="MATE_eukaryotic"/>
    <property type="match status" value="1"/>
</dbReference>
<dbReference type="InterPro" id="IPR045069">
    <property type="entry name" value="MATE_euk"/>
</dbReference>
<dbReference type="InterPro" id="IPR002528">
    <property type="entry name" value="MATE_fam"/>
</dbReference>
<dbReference type="NCBIfam" id="TIGR00797">
    <property type="entry name" value="matE"/>
    <property type="match status" value="1"/>
</dbReference>
<dbReference type="PANTHER" id="PTHR11206">
    <property type="entry name" value="MULTIDRUG RESISTANCE PROTEIN"/>
    <property type="match status" value="1"/>
</dbReference>
<dbReference type="Pfam" id="PF01554">
    <property type="entry name" value="MatE"/>
    <property type="match status" value="2"/>
</dbReference>
<comment type="subcellular location">
    <subcellularLocation>
        <location evidence="1">Membrane</location>
        <topology evidence="1">Multi-pass membrane protein</topology>
    </subcellularLocation>
</comment>
<comment type="similarity">
    <text evidence="3">Belongs to the multi antimicrobial extrusion (MATE) (TC 2.A.66.1) family.</text>
</comment>
<comment type="sequence caution" evidence="3">
    <conflict type="erroneous gene model prediction">
        <sequence resource="EMBL-CDS" id="AAC27412"/>
    </conflict>
</comment>